<accession>Q8Z5K2</accession>
<feature type="peptide" id="PRO_0000043990" description="his operon leader peptide">
    <location>
        <begin position="1"/>
        <end position="13"/>
    </location>
</feature>
<sequence>MTRVQFKHHHHPD</sequence>
<protein>
    <recommendedName>
        <fullName>his operon leader peptide</fullName>
    </recommendedName>
    <alternativeName>
        <fullName>his operon attenuator peptide</fullName>
    </alternativeName>
</protein>
<name>LPHI_SALTI</name>
<comment type="function">
    <text evidence="1">This protein is involved in the attenuation mechanism for the control of the expression of the his operon structural genes.</text>
</comment>
<comment type="similarity">
    <text evidence="2">Belongs to the HisL family.</text>
</comment>
<evidence type="ECO:0000250" key="1"/>
<evidence type="ECO:0000305" key="2"/>
<reference key="1">
    <citation type="journal article" date="2001" name="Nature">
        <title>Complete genome sequence of a multiple drug resistant Salmonella enterica serovar Typhi CT18.</title>
        <authorList>
            <person name="Parkhill J."/>
            <person name="Dougan G."/>
            <person name="James K.D."/>
            <person name="Thomson N.R."/>
            <person name="Pickard D."/>
            <person name="Wain J."/>
            <person name="Churcher C.M."/>
            <person name="Mungall K.L."/>
            <person name="Bentley S.D."/>
            <person name="Holden M.T.G."/>
            <person name="Sebaihia M."/>
            <person name="Baker S."/>
            <person name="Basham D."/>
            <person name="Brooks K."/>
            <person name="Chillingworth T."/>
            <person name="Connerton P."/>
            <person name="Cronin A."/>
            <person name="Davis P."/>
            <person name="Davies R.M."/>
            <person name="Dowd L."/>
            <person name="White N."/>
            <person name="Farrar J."/>
            <person name="Feltwell T."/>
            <person name="Hamlin N."/>
            <person name="Haque A."/>
            <person name="Hien T.T."/>
            <person name="Holroyd S."/>
            <person name="Jagels K."/>
            <person name="Krogh A."/>
            <person name="Larsen T.S."/>
            <person name="Leather S."/>
            <person name="Moule S."/>
            <person name="O'Gaora P."/>
            <person name="Parry C."/>
            <person name="Quail M.A."/>
            <person name="Rutherford K.M."/>
            <person name="Simmonds M."/>
            <person name="Skelton J."/>
            <person name="Stevens K."/>
            <person name="Whitehead S."/>
            <person name="Barrell B.G."/>
        </authorList>
    </citation>
    <scope>NUCLEOTIDE SEQUENCE [LARGE SCALE GENOMIC DNA]</scope>
    <source>
        <strain>CT18</strain>
    </source>
</reference>
<reference key="2">
    <citation type="journal article" date="2003" name="J. Bacteriol.">
        <title>Comparative genomics of Salmonella enterica serovar Typhi strains Ty2 and CT18.</title>
        <authorList>
            <person name="Deng W."/>
            <person name="Liou S.-R."/>
            <person name="Plunkett G. III"/>
            <person name="Mayhew G.F."/>
            <person name="Rose D.J."/>
            <person name="Burland V."/>
            <person name="Kodoyianni V."/>
            <person name="Schwartz D.C."/>
            <person name="Blattner F.R."/>
        </authorList>
    </citation>
    <scope>NUCLEOTIDE SEQUENCE [LARGE SCALE GENOMIC DNA]</scope>
    <source>
        <strain>ATCC 700931 / Ty2</strain>
    </source>
</reference>
<keyword id="KW-0028">Amino-acid biosynthesis</keyword>
<keyword id="KW-0368">Histidine biosynthesis</keyword>
<keyword id="KW-0428">Leader peptide</keyword>
<proteinExistence type="inferred from homology"/>
<organism>
    <name type="scientific">Salmonella typhi</name>
    <dbReference type="NCBI Taxonomy" id="90370"/>
    <lineage>
        <taxon>Bacteria</taxon>
        <taxon>Pseudomonadati</taxon>
        <taxon>Pseudomonadota</taxon>
        <taxon>Gammaproteobacteria</taxon>
        <taxon>Enterobacterales</taxon>
        <taxon>Enterobacteriaceae</taxon>
        <taxon>Salmonella</taxon>
    </lineage>
</organism>
<gene>
    <name type="primary">hisL</name>
    <name type="ordered locus">STY2279</name>
    <name type="ordered locus">t0803</name>
</gene>
<dbReference type="EMBL" id="AL513382">
    <property type="protein sequence ID" value="CAD02432.1"/>
    <property type="molecule type" value="Genomic_DNA"/>
</dbReference>
<dbReference type="EMBL" id="AE014613">
    <property type="protein sequence ID" value="AAO68494.1"/>
    <property type="molecule type" value="Genomic_DNA"/>
</dbReference>
<dbReference type="RefSeq" id="NP_456618.1">
    <property type="nucleotide sequence ID" value="NC_003198.1"/>
</dbReference>
<dbReference type="KEGG" id="stt:t0803"/>
<dbReference type="KEGG" id="sty:STY2279A"/>
<dbReference type="HOGENOM" id="CLU_3435917_0_0_6"/>
<dbReference type="Proteomes" id="UP000000541">
    <property type="component" value="Chromosome"/>
</dbReference>
<dbReference type="Proteomes" id="UP000002670">
    <property type="component" value="Chromosome"/>
</dbReference>
<dbReference type="GO" id="GO:0000105">
    <property type="term" value="P:L-histidine biosynthetic process"/>
    <property type="evidence" value="ECO:0007669"/>
    <property type="project" value="UniProtKB-KW"/>
</dbReference>
<dbReference type="InterPro" id="IPR012565">
    <property type="entry name" value="His_leader"/>
</dbReference>
<dbReference type="Pfam" id="PF08047">
    <property type="entry name" value="His_leader"/>
    <property type="match status" value="1"/>
</dbReference>